<reference key="1">
    <citation type="journal article" date="2009" name="PLoS Genet.">
        <title>Organised genome dynamics in the Escherichia coli species results in highly diverse adaptive paths.</title>
        <authorList>
            <person name="Touchon M."/>
            <person name="Hoede C."/>
            <person name="Tenaillon O."/>
            <person name="Barbe V."/>
            <person name="Baeriswyl S."/>
            <person name="Bidet P."/>
            <person name="Bingen E."/>
            <person name="Bonacorsi S."/>
            <person name="Bouchier C."/>
            <person name="Bouvet O."/>
            <person name="Calteau A."/>
            <person name="Chiapello H."/>
            <person name="Clermont O."/>
            <person name="Cruveiller S."/>
            <person name="Danchin A."/>
            <person name="Diard M."/>
            <person name="Dossat C."/>
            <person name="Karoui M.E."/>
            <person name="Frapy E."/>
            <person name="Garry L."/>
            <person name="Ghigo J.M."/>
            <person name="Gilles A.M."/>
            <person name="Johnson J."/>
            <person name="Le Bouguenec C."/>
            <person name="Lescat M."/>
            <person name="Mangenot S."/>
            <person name="Martinez-Jehanne V."/>
            <person name="Matic I."/>
            <person name="Nassif X."/>
            <person name="Oztas S."/>
            <person name="Petit M.A."/>
            <person name="Pichon C."/>
            <person name="Rouy Z."/>
            <person name="Ruf C.S."/>
            <person name="Schneider D."/>
            <person name="Tourret J."/>
            <person name="Vacherie B."/>
            <person name="Vallenet D."/>
            <person name="Medigue C."/>
            <person name="Rocha E.P.C."/>
            <person name="Denamur E."/>
        </authorList>
    </citation>
    <scope>NUCLEOTIDE SEQUENCE [LARGE SCALE GENOMIC DNA]</scope>
    <source>
        <strain>UMN026 / ExPEC</strain>
    </source>
</reference>
<comment type="function">
    <text evidence="1">This protein is one of the two subunits of integration host factor, a specific DNA-binding protein that functions in genetic recombination as well as in transcriptional and translational control.</text>
</comment>
<comment type="subunit">
    <text evidence="1">Heterodimer of an alpha and a beta chain.</text>
</comment>
<comment type="similarity">
    <text evidence="1">Belongs to the bacterial histone-like protein family.</text>
</comment>
<accession>B7NAR1</accession>
<proteinExistence type="inferred from homology"/>
<protein>
    <recommendedName>
        <fullName evidence="1">Integration host factor subunit beta</fullName>
        <shortName evidence="1">IHF-beta</shortName>
    </recommendedName>
</protein>
<feature type="chain" id="PRO_1000122214" description="Integration host factor subunit beta">
    <location>
        <begin position="1"/>
        <end position="94"/>
    </location>
</feature>
<sequence>MTKSELIERLATQQSHIPAKTVEDAVKEMLEHMASTLAQGERIEIRGFGSFSLHYRAPRTGRNPKTGDKVELEGKYVPHFKPGKELRDRANIYG</sequence>
<name>IHFB_ECOLU</name>
<gene>
    <name evidence="1" type="primary">ihfB</name>
    <name evidence="1" type="synonym">himD</name>
    <name type="ordered locus">ECUMN_1105</name>
</gene>
<organism>
    <name type="scientific">Escherichia coli O17:K52:H18 (strain UMN026 / ExPEC)</name>
    <dbReference type="NCBI Taxonomy" id="585056"/>
    <lineage>
        <taxon>Bacteria</taxon>
        <taxon>Pseudomonadati</taxon>
        <taxon>Pseudomonadota</taxon>
        <taxon>Gammaproteobacteria</taxon>
        <taxon>Enterobacterales</taxon>
        <taxon>Enterobacteriaceae</taxon>
        <taxon>Escherichia</taxon>
    </lineage>
</organism>
<keyword id="KW-0233">DNA recombination</keyword>
<keyword id="KW-0238">DNA-binding</keyword>
<keyword id="KW-0804">Transcription</keyword>
<keyword id="KW-0805">Transcription regulation</keyword>
<keyword id="KW-0810">Translation regulation</keyword>
<dbReference type="EMBL" id="CU928163">
    <property type="protein sequence ID" value="CAR12314.1"/>
    <property type="molecule type" value="Genomic_DNA"/>
</dbReference>
<dbReference type="RefSeq" id="WP_000167336.1">
    <property type="nucleotide sequence ID" value="NC_011751.1"/>
</dbReference>
<dbReference type="RefSeq" id="YP_002411858.1">
    <property type="nucleotide sequence ID" value="NC_011751.1"/>
</dbReference>
<dbReference type="SMR" id="B7NAR1"/>
<dbReference type="STRING" id="585056.ECUMN_1105"/>
<dbReference type="GeneID" id="93776505"/>
<dbReference type="KEGG" id="eum:ECUMN_1105"/>
<dbReference type="PATRIC" id="fig|585056.7.peg.1300"/>
<dbReference type="HOGENOM" id="CLU_105066_2_0_6"/>
<dbReference type="Proteomes" id="UP000007097">
    <property type="component" value="Chromosome"/>
</dbReference>
<dbReference type="GO" id="GO:0005694">
    <property type="term" value="C:chromosome"/>
    <property type="evidence" value="ECO:0007669"/>
    <property type="project" value="InterPro"/>
</dbReference>
<dbReference type="GO" id="GO:0005829">
    <property type="term" value="C:cytosol"/>
    <property type="evidence" value="ECO:0007669"/>
    <property type="project" value="TreeGrafter"/>
</dbReference>
<dbReference type="GO" id="GO:0003677">
    <property type="term" value="F:DNA binding"/>
    <property type="evidence" value="ECO:0007669"/>
    <property type="project" value="UniProtKB-UniRule"/>
</dbReference>
<dbReference type="GO" id="GO:0030527">
    <property type="term" value="F:structural constituent of chromatin"/>
    <property type="evidence" value="ECO:0007669"/>
    <property type="project" value="InterPro"/>
</dbReference>
<dbReference type="GO" id="GO:0006310">
    <property type="term" value="P:DNA recombination"/>
    <property type="evidence" value="ECO:0007669"/>
    <property type="project" value="UniProtKB-UniRule"/>
</dbReference>
<dbReference type="GO" id="GO:0006355">
    <property type="term" value="P:regulation of DNA-templated transcription"/>
    <property type="evidence" value="ECO:0007669"/>
    <property type="project" value="UniProtKB-UniRule"/>
</dbReference>
<dbReference type="GO" id="GO:0006417">
    <property type="term" value="P:regulation of translation"/>
    <property type="evidence" value="ECO:0007669"/>
    <property type="project" value="UniProtKB-UniRule"/>
</dbReference>
<dbReference type="CDD" id="cd13836">
    <property type="entry name" value="IHF_B"/>
    <property type="match status" value="1"/>
</dbReference>
<dbReference type="FunFam" id="4.10.520.10:FF:000003">
    <property type="entry name" value="Integration host factor subunit beta"/>
    <property type="match status" value="1"/>
</dbReference>
<dbReference type="Gene3D" id="4.10.520.10">
    <property type="entry name" value="IHF-like DNA-binding proteins"/>
    <property type="match status" value="1"/>
</dbReference>
<dbReference type="HAMAP" id="MF_00381">
    <property type="entry name" value="IHF_beta"/>
    <property type="match status" value="1"/>
</dbReference>
<dbReference type="InterPro" id="IPR000119">
    <property type="entry name" value="Hist_DNA-bd"/>
</dbReference>
<dbReference type="InterPro" id="IPR020816">
    <property type="entry name" value="Histone-like_DNA-bd_CS"/>
</dbReference>
<dbReference type="InterPro" id="IPR010992">
    <property type="entry name" value="IHF-like_DNA-bd_dom_sf"/>
</dbReference>
<dbReference type="InterPro" id="IPR005685">
    <property type="entry name" value="IHF_beta"/>
</dbReference>
<dbReference type="NCBIfam" id="TIGR00988">
    <property type="entry name" value="hip"/>
    <property type="match status" value="1"/>
</dbReference>
<dbReference type="NCBIfam" id="NF001222">
    <property type="entry name" value="PRK00199.1"/>
    <property type="match status" value="1"/>
</dbReference>
<dbReference type="PANTHER" id="PTHR33175">
    <property type="entry name" value="DNA-BINDING PROTEIN HU"/>
    <property type="match status" value="1"/>
</dbReference>
<dbReference type="PANTHER" id="PTHR33175:SF5">
    <property type="entry name" value="INTEGRATION HOST FACTOR SUBUNIT BETA"/>
    <property type="match status" value="1"/>
</dbReference>
<dbReference type="Pfam" id="PF00216">
    <property type="entry name" value="Bac_DNA_binding"/>
    <property type="match status" value="1"/>
</dbReference>
<dbReference type="PRINTS" id="PR01727">
    <property type="entry name" value="DNABINDINGHU"/>
</dbReference>
<dbReference type="SMART" id="SM00411">
    <property type="entry name" value="BHL"/>
    <property type="match status" value="1"/>
</dbReference>
<dbReference type="SUPFAM" id="SSF47729">
    <property type="entry name" value="IHF-like DNA-binding proteins"/>
    <property type="match status" value="1"/>
</dbReference>
<dbReference type="PROSITE" id="PS00045">
    <property type="entry name" value="HISTONE_LIKE"/>
    <property type="match status" value="1"/>
</dbReference>
<evidence type="ECO:0000255" key="1">
    <source>
        <dbReference type="HAMAP-Rule" id="MF_00381"/>
    </source>
</evidence>